<organism>
    <name type="scientific">Cupriavidus pinatubonensis (strain JMP 134 / LMG 1197)</name>
    <name type="common">Cupriavidus necator (strain JMP 134)</name>
    <dbReference type="NCBI Taxonomy" id="264198"/>
    <lineage>
        <taxon>Bacteria</taxon>
        <taxon>Pseudomonadati</taxon>
        <taxon>Pseudomonadota</taxon>
        <taxon>Betaproteobacteria</taxon>
        <taxon>Burkholderiales</taxon>
        <taxon>Burkholderiaceae</taxon>
        <taxon>Cupriavidus</taxon>
    </lineage>
</organism>
<comment type="function">
    <text evidence="1">Catalyzes the synthesis of GMP from XMP.</text>
</comment>
<comment type="catalytic activity">
    <reaction evidence="1">
        <text>XMP + L-glutamine + ATP + H2O = GMP + L-glutamate + AMP + diphosphate + 2 H(+)</text>
        <dbReference type="Rhea" id="RHEA:11680"/>
        <dbReference type="ChEBI" id="CHEBI:15377"/>
        <dbReference type="ChEBI" id="CHEBI:15378"/>
        <dbReference type="ChEBI" id="CHEBI:29985"/>
        <dbReference type="ChEBI" id="CHEBI:30616"/>
        <dbReference type="ChEBI" id="CHEBI:33019"/>
        <dbReference type="ChEBI" id="CHEBI:57464"/>
        <dbReference type="ChEBI" id="CHEBI:58115"/>
        <dbReference type="ChEBI" id="CHEBI:58359"/>
        <dbReference type="ChEBI" id="CHEBI:456215"/>
        <dbReference type="EC" id="6.3.5.2"/>
    </reaction>
</comment>
<comment type="pathway">
    <text evidence="1">Purine metabolism; GMP biosynthesis; GMP from XMP (L-Gln route): step 1/1.</text>
</comment>
<comment type="subunit">
    <text evidence="1">Homodimer.</text>
</comment>
<evidence type="ECO:0000255" key="1">
    <source>
        <dbReference type="HAMAP-Rule" id="MF_00344"/>
    </source>
</evidence>
<feature type="chain" id="PRO_0000229462" description="GMP synthase [glutamine-hydrolyzing]">
    <location>
        <begin position="1"/>
        <end position="539"/>
    </location>
</feature>
<feature type="domain" description="Glutamine amidotransferase type-1" evidence="1">
    <location>
        <begin position="4"/>
        <end position="202"/>
    </location>
</feature>
<feature type="domain" description="GMPS ATP-PPase" evidence="1">
    <location>
        <begin position="203"/>
        <end position="395"/>
    </location>
</feature>
<feature type="active site" description="Nucleophile" evidence="1">
    <location>
        <position position="81"/>
    </location>
</feature>
<feature type="active site" evidence="1">
    <location>
        <position position="176"/>
    </location>
</feature>
<feature type="active site" evidence="1">
    <location>
        <position position="178"/>
    </location>
</feature>
<feature type="binding site" evidence="1">
    <location>
        <begin position="230"/>
        <end position="236"/>
    </location>
    <ligand>
        <name>ATP</name>
        <dbReference type="ChEBI" id="CHEBI:30616"/>
    </ligand>
</feature>
<sequence>MHDKILILDFGSQVTQLIARRVREAHVYCEIHPNDVSDEFVREYAPKGIILSGSHASTYEDHQLRAPQAVWDLGVPVLGICYGMQTMAVQLGGKVEWSDHREFGYAEVRAHGHTPLLKDIEDFSTAEGHGMLKVWMSHGDKVAALPPGFKLMASTPSCPIAGMADEARGYYAVQFHPEVTHTSKGREMIERFVLGICRAKADWVMKDHIEEAVALIRKQVGDEEVILGLSGGVDSSVAAALIHRAIGDQLTCVFVDHGLLRLDEGKMVMDMFAGRLHAKVVHIDASEQFLGHLAGVTDPEQKRKIIGREFVEVFQAEAKKLSNAKWLAQGTIYPDVVESGGTKTKKATTIKSHHNVGGLPETLGLKLLEPLRDLFKDEVRQLGVALGLPPEMVYRHPFPGPGLGVRILGEVKRDYADLLRRADAIFIEELRKTIATEQDAAAGLCEPQQVGKSWYDLTSQAFAVFLPVKSVGVMGDGRTYDYVVALRAVQTTDFMTAHWAHLPYSLLGRCSNRIINEVRGLNRVVYDVSGKPPATIEWE</sequence>
<dbReference type="EC" id="6.3.5.2" evidence="1"/>
<dbReference type="EMBL" id="CP000090">
    <property type="protein sequence ID" value="AAZ61219.1"/>
    <property type="molecule type" value="Genomic_DNA"/>
</dbReference>
<dbReference type="SMR" id="Q470G4"/>
<dbReference type="STRING" id="264198.Reut_A1854"/>
<dbReference type="KEGG" id="reu:Reut_A1854"/>
<dbReference type="eggNOG" id="COG0518">
    <property type="taxonomic scope" value="Bacteria"/>
</dbReference>
<dbReference type="eggNOG" id="COG0519">
    <property type="taxonomic scope" value="Bacteria"/>
</dbReference>
<dbReference type="HOGENOM" id="CLU_014340_0_5_4"/>
<dbReference type="OrthoDB" id="9802219at2"/>
<dbReference type="UniPathway" id="UPA00189">
    <property type="reaction ID" value="UER00296"/>
</dbReference>
<dbReference type="GO" id="GO:0005829">
    <property type="term" value="C:cytosol"/>
    <property type="evidence" value="ECO:0007669"/>
    <property type="project" value="TreeGrafter"/>
</dbReference>
<dbReference type="GO" id="GO:0005524">
    <property type="term" value="F:ATP binding"/>
    <property type="evidence" value="ECO:0007669"/>
    <property type="project" value="UniProtKB-UniRule"/>
</dbReference>
<dbReference type="GO" id="GO:0003921">
    <property type="term" value="F:GMP synthase activity"/>
    <property type="evidence" value="ECO:0007669"/>
    <property type="project" value="InterPro"/>
</dbReference>
<dbReference type="CDD" id="cd01742">
    <property type="entry name" value="GATase1_GMP_Synthase"/>
    <property type="match status" value="1"/>
</dbReference>
<dbReference type="CDD" id="cd01997">
    <property type="entry name" value="GMP_synthase_C"/>
    <property type="match status" value="1"/>
</dbReference>
<dbReference type="FunFam" id="3.30.300.10:FF:000002">
    <property type="entry name" value="GMP synthase [glutamine-hydrolyzing]"/>
    <property type="match status" value="1"/>
</dbReference>
<dbReference type="FunFam" id="3.40.50.620:FF:000001">
    <property type="entry name" value="GMP synthase [glutamine-hydrolyzing]"/>
    <property type="match status" value="1"/>
</dbReference>
<dbReference type="FunFam" id="3.40.50.880:FF:000001">
    <property type="entry name" value="GMP synthase [glutamine-hydrolyzing]"/>
    <property type="match status" value="1"/>
</dbReference>
<dbReference type="Gene3D" id="3.30.300.10">
    <property type="match status" value="1"/>
</dbReference>
<dbReference type="Gene3D" id="3.40.50.880">
    <property type="match status" value="1"/>
</dbReference>
<dbReference type="Gene3D" id="3.40.50.620">
    <property type="entry name" value="HUPs"/>
    <property type="match status" value="1"/>
</dbReference>
<dbReference type="HAMAP" id="MF_00344">
    <property type="entry name" value="GMP_synthase"/>
    <property type="match status" value="1"/>
</dbReference>
<dbReference type="InterPro" id="IPR029062">
    <property type="entry name" value="Class_I_gatase-like"/>
</dbReference>
<dbReference type="InterPro" id="IPR017926">
    <property type="entry name" value="GATASE"/>
</dbReference>
<dbReference type="InterPro" id="IPR001674">
    <property type="entry name" value="GMP_synth_C"/>
</dbReference>
<dbReference type="InterPro" id="IPR004739">
    <property type="entry name" value="GMP_synth_GATase"/>
</dbReference>
<dbReference type="InterPro" id="IPR022955">
    <property type="entry name" value="GMP_synthase"/>
</dbReference>
<dbReference type="InterPro" id="IPR025777">
    <property type="entry name" value="GMPS_ATP_PPase_dom"/>
</dbReference>
<dbReference type="InterPro" id="IPR022310">
    <property type="entry name" value="NAD/GMP_synthase"/>
</dbReference>
<dbReference type="InterPro" id="IPR014729">
    <property type="entry name" value="Rossmann-like_a/b/a_fold"/>
</dbReference>
<dbReference type="NCBIfam" id="TIGR00884">
    <property type="entry name" value="guaA_Cterm"/>
    <property type="match status" value="1"/>
</dbReference>
<dbReference type="NCBIfam" id="TIGR00888">
    <property type="entry name" value="guaA_Nterm"/>
    <property type="match status" value="1"/>
</dbReference>
<dbReference type="NCBIfam" id="NF000848">
    <property type="entry name" value="PRK00074.1"/>
    <property type="match status" value="1"/>
</dbReference>
<dbReference type="PANTHER" id="PTHR11922:SF2">
    <property type="entry name" value="GMP SYNTHASE [GLUTAMINE-HYDROLYZING]"/>
    <property type="match status" value="1"/>
</dbReference>
<dbReference type="PANTHER" id="PTHR11922">
    <property type="entry name" value="GMP SYNTHASE-RELATED"/>
    <property type="match status" value="1"/>
</dbReference>
<dbReference type="Pfam" id="PF00117">
    <property type="entry name" value="GATase"/>
    <property type="match status" value="1"/>
</dbReference>
<dbReference type="Pfam" id="PF00958">
    <property type="entry name" value="GMP_synt_C"/>
    <property type="match status" value="1"/>
</dbReference>
<dbReference type="Pfam" id="PF02540">
    <property type="entry name" value="NAD_synthase"/>
    <property type="match status" value="1"/>
</dbReference>
<dbReference type="SUPFAM" id="SSF52402">
    <property type="entry name" value="Adenine nucleotide alpha hydrolases-like"/>
    <property type="match status" value="1"/>
</dbReference>
<dbReference type="SUPFAM" id="SSF52317">
    <property type="entry name" value="Class I glutamine amidotransferase-like"/>
    <property type="match status" value="1"/>
</dbReference>
<dbReference type="SUPFAM" id="SSF54810">
    <property type="entry name" value="GMP synthetase C-terminal dimerisation domain"/>
    <property type="match status" value="1"/>
</dbReference>
<dbReference type="PROSITE" id="PS51273">
    <property type="entry name" value="GATASE_TYPE_1"/>
    <property type="match status" value="1"/>
</dbReference>
<dbReference type="PROSITE" id="PS51553">
    <property type="entry name" value="GMPS_ATP_PPASE"/>
    <property type="match status" value="1"/>
</dbReference>
<keyword id="KW-0067">ATP-binding</keyword>
<keyword id="KW-0315">Glutamine amidotransferase</keyword>
<keyword id="KW-0332">GMP biosynthesis</keyword>
<keyword id="KW-0436">Ligase</keyword>
<keyword id="KW-0547">Nucleotide-binding</keyword>
<keyword id="KW-0658">Purine biosynthesis</keyword>
<gene>
    <name evidence="1" type="primary">guaA</name>
    <name type="ordered locus">Reut_A1854</name>
</gene>
<proteinExistence type="inferred from homology"/>
<accession>Q470G4</accession>
<name>GUAA_CUPPJ</name>
<reference key="1">
    <citation type="journal article" date="2010" name="PLoS ONE">
        <title>The complete multipartite genome sequence of Cupriavidus necator JMP134, a versatile pollutant degrader.</title>
        <authorList>
            <person name="Lykidis A."/>
            <person name="Perez-Pantoja D."/>
            <person name="Ledger T."/>
            <person name="Mavromatis K."/>
            <person name="Anderson I.J."/>
            <person name="Ivanova N.N."/>
            <person name="Hooper S.D."/>
            <person name="Lapidus A."/>
            <person name="Lucas S."/>
            <person name="Gonzalez B."/>
            <person name="Kyrpides N.C."/>
        </authorList>
    </citation>
    <scope>NUCLEOTIDE SEQUENCE [LARGE SCALE GENOMIC DNA]</scope>
    <source>
        <strain>JMP134 / LMG 1197</strain>
    </source>
</reference>
<protein>
    <recommendedName>
        <fullName evidence="1">GMP synthase [glutamine-hydrolyzing]</fullName>
        <ecNumber evidence="1">6.3.5.2</ecNumber>
    </recommendedName>
    <alternativeName>
        <fullName evidence="1">GMP synthetase</fullName>
    </alternativeName>
    <alternativeName>
        <fullName evidence="1">Glutamine amidotransferase</fullName>
    </alternativeName>
</protein>